<name>BILF1_EBVB9</name>
<comment type="function">
    <text evidence="2 3 4 5 6 7 8 9 10 11">Constitutively active, ligand-independent G protein-coupled receptor that has immunoevasive and oncogenic activities (PubMed:15596837, PubMed:15596846, PubMed:30647152, PubMed:34216564). Couples with the host inhibitory G protein (Gi) in order to disrupt the host chemokine signaling (PubMed:34216564). As a consequence of its constitutive activity, mediates host CXCR4 inhibition (PubMed:20622011). Enhances degradation of host major histocompatibility complex class I antigens via lysosomes, thereby modulating the antigen presentation to cytotoxic T cells (PubMed:19119421, PubMed:21123379, PubMed:23315076). Targets selectively HLA-A, HLA-Band HLA-E molecules (PubMed:23315076). Targets also newly synthesized MHC-I/peptide complexes en route to the host cell surface (PubMed:21123379). Inhibits the host EIF2AK2/PKR phosphorylation (PubMed:15596837). Displays tranforming activity (PubMed:20543866). Utilizes its C-terminal tail to trigger host MAVS UFMylation via PARK2, resulting in selective MAVS removal from mitochondrial membranes and routing to lysosomes to prevent viral activation of the NLRP3 inflammasome (PubMed:37311461).</text>
</comment>
<comment type="subunit">
    <text evidence="6 10">Interacts with host CXCR4 to form higher-order heterooligomers (PubMed:20622011). Interacts with host Gi heterotrimer (PubMed:34216564).</text>
</comment>
<comment type="subcellular location">
    <subcellularLocation>
        <location evidence="3">Host cell membrane</location>
        <topology evidence="13">Multi-pass membrane protein</topology>
    </subcellularLocation>
    <subcellularLocation>
        <location evidence="11">Host mitochondrion outer membrane</location>
    </subcellularLocation>
</comment>
<comment type="induction">
    <text evidence="8">Expressed early in the viral lytic cycle.</text>
</comment>
<comment type="domain">
    <text evidence="8 9">The extracellular N-terminus and third extracellular loop are involved in host MHC-I down-regulation (PubMed:30647152). The cytoplasmic C-terminus is also required for host MHC-I down-regulation (PubMed:23315076).</text>
</comment>
<comment type="similarity">
    <text evidence="13">Belongs to the Epstein-Barr virus BILF1 protein family.</text>
</comment>
<comment type="sequence caution" evidence="13">
    <conflict type="erroneous initiation">
        <sequence resource="EMBL-CDS" id="BAV60102"/>
    </conflict>
    <text>Extended N-terminus.</text>
</comment>
<comment type="sequence caution" evidence="13">
    <conflict type="erroneous initiation">
        <sequence resource="EMBL-CDS" id="BAX36603"/>
    </conflict>
    <text>Extended N-terminus.</text>
</comment>
<comment type="sequence caution" evidence="13">
    <conflict type="erroneous initiation">
        <sequence resource="EMBL-CDS" id="BAX36651"/>
    </conflict>
    <text>Extended N-terminus.</text>
</comment>
<comment type="sequence caution" evidence="13">
    <conflict type="erroneous initiation">
        <sequence resource="EMBL-CDS" id="BAX36697"/>
    </conflict>
    <text>Extended N-terminus.</text>
</comment>
<comment type="sequence caution" evidence="13">
    <conflict type="erroneous initiation">
        <sequence resource="EMBL-CDS" id="BAX36744"/>
    </conflict>
    <text>Extended N-terminus.</text>
</comment>
<comment type="sequence caution" evidence="13">
    <conflict type="erroneous initiation">
        <sequence resource="EMBL-CDS" id="BAX36790"/>
    </conflict>
    <text>Extended N-terminus.</text>
</comment>
<comment type="sequence caution" evidence="13">
    <conflict type="erroneous initiation">
        <sequence resource="EMBL-CDS" id="BAX36838"/>
    </conflict>
    <text>Extended N-terminus.</text>
</comment>
<comment type="sequence caution" evidence="13">
    <conflict type="erroneous initiation">
        <sequence resource="EMBL-CDS" id="BAX36885"/>
    </conflict>
    <text>Extended N-terminus.</text>
</comment>
<keyword id="KW-0002">3D-structure</keyword>
<keyword id="KW-1015">Disulfide bond</keyword>
<keyword id="KW-0244">Early protein</keyword>
<keyword id="KW-1032">Host cell membrane</keyword>
<keyword id="KW-1043">Host membrane</keyword>
<keyword id="KW-1045">Host mitochondrion</keyword>
<keyword id="KW-1047">Host mitochondrion outer membrane</keyword>
<keyword id="KW-0945">Host-virus interaction</keyword>
<keyword id="KW-1080">Inhibition of host adaptive immune response by virus</keyword>
<keyword id="KW-1090">Inhibition of host innate immune response by virus</keyword>
<keyword id="KW-1114">Inhibition of host interferon signaling pathway by virus</keyword>
<keyword id="KW-1115">Inhibition of host MHC class I molecule presentation by virus</keyword>
<keyword id="KW-1102">Inhibition of host PKR by virus</keyword>
<keyword id="KW-0922">Interferon antiviral system evasion</keyword>
<keyword id="KW-0472">Membrane</keyword>
<keyword id="KW-1185">Reference proteome</keyword>
<keyword id="KW-0812">Transmembrane</keyword>
<keyword id="KW-1133">Transmembrane helix</keyword>
<keyword id="KW-0899">Viral immunoevasion</keyword>
<evidence type="ECO:0000255" key="1"/>
<evidence type="ECO:0000269" key="2">
    <source>
    </source>
</evidence>
<evidence type="ECO:0000269" key="3">
    <source>
    </source>
</evidence>
<evidence type="ECO:0000269" key="4">
    <source>
    </source>
</evidence>
<evidence type="ECO:0000269" key="5">
    <source>
    </source>
</evidence>
<evidence type="ECO:0000269" key="6">
    <source>
    </source>
</evidence>
<evidence type="ECO:0000269" key="7">
    <source>
    </source>
</evidence>
<evidence type="ECO:0000269" key="8">
    <source>
    </source>
</evidence>
<evidence type="ECO:0000269" key="9">
    <source>
    </source>
</evidence>
<evidence type="ECO:0000269" key="10">
    <source>
    </source>
</evidence>
<evidence type="ECO:0000269" key="11">
    <source>
    </source>
</evidence>
<evidence type="ECO:0000303" key="12">
    <source>
    </source>
</evidence>
<evidence type="ECO:0000305" key="13"/>
<evidence type="ECO:0000305" key="14">
    <source>
    </source>
</evidence>
<evidence type="ECO:0000312" key="15">
    <source>
        <dbReference type="EMBL" id="BAV60102.1"/>
    </source>
</evidence>
<evidence type="ECO:0000312" key="16">
    <source>
        <dbReference type="EMBL" id="BAX36603.1"/>
    </source>
</evidence>
<evidence type="ECO:0000312" key="17">
    <source>
        <dbReference type="EMBL" id="BAX36651.1"/>
    </source>
</evidence>
<evidence type="ECO:0000312" key="18">
    <source>
        <dbReference type="EMBL" id="BAX36697.1"/>
    </source>
</evidence>
<evidence type="ECO:0000312" key="19">
    <source>
        <dbReference type="EMBL" id="BAX36744.1"/>
    </source>
</evidence>
<evidence type="ECO:0000312" key="20">
    <source>
        <dbReference type="EMBL" id="BAX36790.1"/>
    </source>
</evidence>
<evidence type="ECO:0000312" key="21">
    <source>
        <dbReference type="EMBL" id="BAX36838.1"/>
    </source>
</evidence>
<evidence type="ECO:0000312" key="22">
    <source>
        <dbReference type="EMBL" id="BAX36885.1"/>
    </source>
</evidence>
<evidence type="ECO:0007829" key="23">
    <source>
        <dbReference type="PDB" id="7JHJ"/>
    </source>
</evidence>
<feature type="chain" id="PRO_0000116187" description="G-protein coupled receptor BILF1">
    <location>
        <begin position="1"/>
        <end position="312"/>
    </location>
</feature>
<feature type="topological domain" description="Extracellular" evidence="14">
    <location>
        <begin position="1"/>
        <end position="40"/>
    </location>
</feature>
<feature type="transmembrane region" description="Helical" evidence="1">
    <location>
        <begin position="41"/>
        <end position="61"/>
    </location>
</feature>
<feature type="topological domain" description="Cytoplasmic" evidence="14">
    <location>
        <begin position="62"/>
        <end position="67"/>
    </location>
</feature>
<feature type="transmembrane region" description="Helical" evidence="1">
    <location>
        <begin position="68"/>
        <end position="88"/>
    </location>
</feature>
<feature type="topological domain" description="Extracellular" evidence="14">
    <location>
        <begin position="89"/>
        <end position="95"/>
    </location>
</feature>
<feature type="transmembrane region" description="Helical" evidence="1">
    <location>
        <begin position="96"/>
        <end position="116"/>
    </location>
</feature>
<feature type="topological domain" description="Cytoplasmic" evidence="14">
    <location>
        <begin position="117"/>
        <end position="138"/>
    </location>
</feature>
<feature type="transmembrane region" description="Helical" evidence="1">
    <location>
        <begin position="139"/>
        <end position="159"/>
    </location>
</feature>
<feature type="topological domain" description="Extracellular" evidence="14">
    <location>
        <begin position="160"/>
        <end position="192"/>
    </location>
</feature>
<feature type="transmembrane region" description="Helical" evidence="1">
    <location>
        <begin position="193"/>
        <end position="213"/>
    </location>
</feature>
<feature type="topological domain" description="Cytoplasmic" evidence="14">
    <location>
        <begin position="214"/>
        <end position="228"/>
    </location>
</feature>
<feature type="transmembrane region" description="Helical" evidence="1">
    <location>
        <begin position="229"/>
        <end position="249"/>
    </location>
</feature>
<feature type="topological domain" description="Extracellular" evidence="14">
    <location>
        <begin position="250"/>
        <end position="269"/>
    </location>
</feature>
<feature type="transmembrane region" description="Helical" evidence="1">
    <location>
        <begin position="270"/>
        <end position="290"/>
    </location>
</feature>
<feature type="topological domain" description="Cytoplasmic" evidence="14">
    <location>
        <begin position="291"/>
        <end position="312"/>
    </location>
</feature>
<feature type="disulfide bond" evidence="10">
    <location>
        <begin position="28"/>
        <end position="258"/>
    </location>
</feature>
<feature type="disulfide bond" evidence="10">
    <location>
        <begin position="97"/>
        <end position="174"/>
    </location>
</feature>
<feature type="mutagenesis site" description="Reduced surface expression but no effect on retained Gi signaling activity." evidence="9">
    <original>C</original>
    <variation>A</variation>
    <location>
        <position position="28"/>
    </location>
</feature>
<feature type="mutagenesis site" description="About 50% loss of constitutive Gi signaling." evidence="10">
    <original>L</original>
    <variation>A</variation>
    <location>
        <position position="75"/>
    </location>
</feature>
<feature type="mutagenesis site" description="Reduced surface expression and complete loss of Gi signaling activity." evidence="9">
    <original>C</original>
    <variation>A</variation>
    <location>
        <position position="97"/>
    </location>
</feature>
<feature type="mutagenesis site" description="About 40% loss of constitutive Gi signaling." evidence="10">
    <original>H</original>
    <variation>A</variation>
    <location>
        <position position="115"/>
    </location>
</feature>
<feature type="mutagenesis site" description="About 50% loss of constitutive Gi signaling." evidence="10">
    <original>E</original>
    <variation>A</variation>
    <location>
        <position position="121"/>
    </location>
</feature>
<feature type="mutagenesis site" description="About 80% loss of constitutive Gi signaling." evidence="10">
    <original>K</original>
    <variation>A</variation>
    <location>
        <position position="122"/>
    </location>
</feature>
<feature type="mutagenesis site" description="About 25% loss of constitutive Gi signaling." evidence="10">
    <original>A</original>
    <variation>F</variation>
    <location>
        <position position="125"/>
    </location>
</feature>
<feature type="mutagenesis site" description="Reduced surface expression and complete loss of Gi signaling activity." evidence="9">
    <original>C</original>
    <variation>A</variation>
    <location>
        <position position="174"/>
    </location>
</feature>
<feature type="mutagenesis site" description="Slight increase in constitutive Gi signaling." evidence="10">
    <original>M</original>
    <variation>F</variation>
    <location>
        <position position="240"/>
    </location>
</feature>
<feature type="mutagenesis site" description="About 10% loss of constitutive Gi signaling." evidence="10">
    <original>L</original>
    <variation>F</variation>
    <location>
        <position position="241"/>
    </location>
</feature>
<feature type="mutagenesis site" description="Reduced surface expression but no effect on retained Gi signaling activity." evidence="9">
    <original>C</original>
    <variation>A</variation>
    <location>
        <position position="258"/>
    </location>
</feature>
<feature type="mutagenesis site" description="About 15% loss of constitutive Gi signaling." evidence="10">
    <original>A</original>
    <variation>F</variation>
    <location>
        <position position="271"/>
    </location>
</feature>
<feature type="mutagenesis site" description="About 60% loss of constitutive Gi signaling." evidence="10">
    <original>Y</original>
    <variation>A</variation>
    <location>
        <position position="282"/>
    </location>
</feature>
<feature type="mutagenesis site" description="No effect on constitutive Gi signaling." evidence="10">
    <original>H</original>
    <variation>A</variation>
    <location>
        <position position="288"/>
    </location>
</feature>
<feature type="helix" evidence="23">
    <location>
        <begin position="34"/>
        <end position="59"/>
    </location>
</feature>
<feature type="helix" evidence="23">
    <location>
        <begin position="67"/>
        <end position="91"/>
    </location>
</feature>
<feature type="helix" evidence="23">
    <location>
        <begin position="97"/>
        <end position="126"/>
    </location>
</feature>
<feature type="helix" evidence="23">
    <location>
        <begin position="140"/>
        <end position="160"/>
    </location>
</feature>
<feature type="strand" evidence="23">
    <location>
        <begin position="168"/>
        <end position="170"/>
    </location>
</feature>
<feature type="helix" evidence="23">
    <location>
        <begin position="182"/>
        <end position="211"/>
    </location>
</feature>
<feature type="strand" evidence="23">
    <location>
        <begin position="214"/>
        <end position="216"/>
    </location>
</feature>
<feature type="helix" evidence="23">
    <location>
        <begin position="217"/>
        <end position="219"/>
    </location>
</feature>
<feature type="helix" evidence="23">
    <location>
        <begin position="222"/>
        <end position="239"/>
    </location>
</feature>
<feature type="helix" evidence="23">
    <location>
        <begin position="243"/>
        <end position="245"/>
    </location>
</feature>
<feature type="turn" evidence="23">
    <location>
        <begin position="253"/>
        <end position="256"/>
    </location>
</feature>
<feature type="strand" evidence="23">
    <location>
        <begin position="261"/>
        <end position="263"/>
    </location>
</feature>
<feature type="helix" evidence="23">
    <location>
        <begin position="268"/>
        <end position="284"/>
    </location>
</feature>
<feature type="helix" evidence="23">
    <location>
        <begin position="287"/>
        <end position="300"/>
    </location>
</feature>
<sequence length="312" mass="34519">MLSTMAPGSTVGTLVANMTSVNATEDACTKSYSAFLSGMTSLLLVLLILLTLAGILFIIFVRKLVHRMDVWLIALLIELLLWVLGKMIQEFSSTGLCLLTQNMMFLGLMCSVWTHLGMALEKTLALFSRTPKRTSHRNVCLYLMGVFCLVLLLIIILLITMGPDANLNRGPNMCREGPTKGMHTAVQGLKAGCYLLAAVLIVLLTVIIIWKLLRTKFGRKPRLICNVTFTGLICAFSWFMLSLPLLFLGEAGSLGFDCTESLVARYYPGPAACLALLLIILYAWSFSHFMDSLKNQVTVTARYFRRVPSQST</sequence>
<reference key="1">
    <citation type="journal article" date="1983" name="Mol. Biol. Med.">
        <title>Sequence analysis of the 17,166 base-pair EcoRI fragment C of B95-8 Epstein-Barr virus.</title>
        <authorList>
            <person name="Bankier A.T."/>
            <person name="Deininger P.L."/>
            <person name="Farrell P.J."/>
            <person name="Barrell B.G."/>
        </authorList>
    </citation>
    <scope>NUCLEOTIDE SEQUENCE [GENOMIC DNA]</scope>
</reference>
<reference key="2">
    <citation type="journal article" date="1984" name="Nature">
        <title>DNA sequence and expression of the B95-8 Epstein-Barr virus genome.</title>
        <authorList>
            <person name="Baer R."/>
            <person name="Bankier A.T."/>
            <person name="Biggin M.D."/>
            <person name="Deininger P.L."/>
            <person name="Farrell P.J."/>
            <person name="Gibson T.J."/>
            <person name="Hatfull G."/>
            <person name="Hudson G.S."/>
            <person name="Satchwell S.C."/>
            <person name="Seguin C."/>
            <person name="Tuffnell P.S."/>
            <person name="Barrell B.G."/>
        </authorList>
    </citation>
    <scope>NUCLEOTIDE SEQUENCE [LARGE SCALE GENOMIC DNA]</scope>
</reference>
<reference key="3">
    <citation type="submission" date="2016-03" db="EMBL/GenBank/DDBJ databases">
        <authorList>
            <person name="Ploux O."/>
        </authorList>
    </citation>
    <scope>NUCLEOTIDE SEQUENCE [GENOMIC DNA]</scope>
    <source>
        <strain evidence="15">HNNPC1</strain>
    </source>
</reference>
<reference key="4">
    <citation type="submission" date="2016-05" db="EMBL/GenBank/DDBJ databases">
        <title>Whole-genome sequencing identification of genomic alterations in nasopharyngeal carcinoma and NPC-derived Epstein-Barr virus.</title>
        <authorList>
            <person name="Xiong W."/>
            <person name="Li G.Y."/>
            <person name="Zeng C.Y."/>
            <person name="Tu C.F."/>
        </authorList>
    </citation>
    <scope>NUCLEOTIDE SEQUENCE [GENOMIC DNA]</scope>
    <source>
        <strain evidence="15">HNNPC1</strain>
        <strain evidence="16">HNNPC2</strain>
        <strain evidence="17">HNNPC3</strain>
        <strain evidence="18">HNNPC4</strain>
        <strain evidence="19">HNNPC5</strain>
        <strain evidence="20">HNNPC6</strain>
        <strain evidence="21">HNNPC7</strain>
        <strain evidence="22">HNNPC8</strain>
    </source>
</reference>
<reference key="5">
    <citation type="submission" date="2016-05" db="EMBL/GenBank/DDBJ databases">
        <authorList>
            <person name="Lavstsen T."/>
            <person name="Jespersen J.S."/>
        </authorList>
    </citation>
    <scope>NUCLEOTIDE SEQUENCE [GENOMIC DNA]</scope>
    <source>
        <strain evidence="18">HNNPC4</strain>
    </source>
</reference>
<reference key="6">
    <citation type="journal article" date="2005" name="J. Virol.">
        <title>Epstein-Barr virus-encoded BILF1 is a constitutively active G protein-coupled receptor.</title>
        <authorList>
            <person name="Paulsen S.J."/>
            <person name="Rosenkilde M.M."/>
            <person name="Eugen-Olsen J."/>
            <person name="Kledal T.N."/>
        </authorList>
    </citation>
    <scope>FUNCTION</scope>
    <scope>SUBCELLULAR LOCATION</scope>
</reference>
<reference key="7">
    <citation type="journal article" date="2003" name="Virology">
        <title>Updated Epstein-Barr virus (EBV) DNA sequence and analysis of a promoter for the BART (CST, BARF0) RNAs of EBV.</title>
        <authorList>
            <person name="de Jesus O."/>
            <person name="Smith P.R."/>
            <person name="Spender L.C."/>
            <person name="Elgueta Karstegl C."/>
            <person name="Niller H.H."/>
            <person name="Huang D."/>
            <person name="Farrell P.J."/>
        </authorList>
    </citation>
    <scope>GENOME REANNOTATION</scope>
</reference>
<reference key="8">
    <citation type="journal article" date="2005" name="J. Virol.">
        <title>The Epstein-Barr virus BILF1 gene encodes a G protein-coupled receptor that inhibits phosphorylation of RNA-dependent protein kinase.</title>
        <authorList>
            <person name="Beisser P.S."/>
            <person name="Verzijl D."/>
            <person name="Gruijthuijsen Y.K."/>
            <person name="Beuken E."/>
            <person name="Smit M.J."/>
            <person name="Leurs R."/>
            <person name="Bruggeman C.A."/>
            <person name="Vink C."/>
        </authorList>
    </citation>
    <scope>FUNCTION</scope>
</reference>
<reference key="9">
    <citation type="journal article" date="2009" name="PLoS Pathog.">
        <title>The Epstein-Barr virus G-protein-coupled receptor contributes to immune evasion by targeting MHC class I molecules for degradation.</title>
        <authorList>
            <person name="Zuo J."/>
            <person name="Currin A."/>
            <person name="Griffin B.D."/>
            <person name="Shannon-Lowe C."/>
            <person name="Thomas W.A."/>
            <person name="Ressing M.E."/>
            <person name="Wiertz E.J."/>
            <person name="Rowe M."/>
        </authorList>
    </citation>
    <scope>FUNCTION</scope>
</reference>
<reference key="10">
    <citation type="journal article" date="2010" name="J. Biol. Chem.">
        <title>The Epstein-Barr virus-encoded G protein-coupled receptor BILF1 hetero-oligomerizes with human CXCR4, scavenges Galphai proteins, and constitutively impairs CXCR4 functioning.</title>
        <authorList>
            <person name="Nijmeijer S."/>
            <person name="Leurs R."/>
            <person name="Smit M.J."/>
            <person name="Vischer H.F."/>
        </authorList>
    </citation>
    <scope>FUNCTION</scope>
    <scope>INTERACTION WITH HOST CXCR4</scope>
</reference>
<reference key="11">
    <citation type="journal article" date="2010" name="Oncogene">
        <title>Cell transformation mediated by the Epstein-Barr virus G protein-coupled receptor BILF1 is dependent on constitutive signaling.</title>
        <authorList>
            <person name="Lyngaa R."/>
            <person name="Noerregaard K."/>
            <person name="Kristensen M."/>
            <person name="Kubale V."/>
            <person name="Rosenkilde M.M."/>
            <person name="Kledal T.N."/>
        </authorList>
    </citation>
    <scope>FUNCTION</scope>
</reference>
<reference key="12">
    <citation type="journal article" date="2011" name="J. Virol.">
        <title>The Epstein-Barr virus-encoded BILF1 protein modulates immune recognition of endogenously processed antigen by targeting major histocompatibility complex class I molecules trafficking on both the exocytic and endocytic pathways.</title>
        <authorList>
            <person name="Zuo J."/>
            <person name="Quinn L.L."/>
            <person name="Tamblyn J."/>
            <person name="Thomas W.A."/>
            <person name="Feederle R."/>
            <person name="Delecluse H.J."/>
            <person name="Hislop A.D."/>
            <person name="Rowe M."/>
        </authorList>
    </citation>
    <scope>FUNCTION</scope>
</reference>
<reference key="13">
    <citation type="journal article" date="2013" name="J. Immunol.">
        <title>EBV BILF1 evolved to downregulate cell surface display of a wide range of HLA class I molecules through their cytoplasmic tail.</title>
        <authorList>
            <person name="Griffin B.D."/>
            <person name="Gram A.M."/>
            <person name="Mulder A."/>
            <person name="Van Leeuwen D."/>
            <person name="Claas F.H."/>
            <person name="Wang F."/>
            <person name="Ressing M.E."/>
            <person name="Wiertz E."/>
        </authorList>
    </citation>
    <scope>FUNCTION</scope>
    <scope>INDUCTION</scope>
    <scope>DOMAIN</scope>
</reference>
<reference key="14">
    <citation type="journal article" date="2019" name="MBio">
        <title>Distinct Roles of Extracellular Domains in the Epstein-Barr Virus-Encoded BILF1 Receptor for Signaling and Major Histocompatibility Complex Class I Downregulation.</title>
        <authorList>
            <person name="Fares S."/>
            <person name="Spiess K."/>
            <person name="Olesen E.T.B."/>
            <person name="Zuo J."/>
            <person name="Jackson S."/>
            <person name="Kledal T.N."/>
            <person name="Wills M.R."/>
            <person name="Rosenkilde M.M."/>
        </authorList>
    </citation>
    <scope>DOMAIN</scope>
    <scope>FUNCTION</scope>
    <scope>MUTAGENESIS OF CYS-28; CYS-97; CYS-174 AND CYS-258</scope>
</reference>
<reference key="15">
    <citation type="journal article" date="2021" name="Pharmacol. Rev.">
        <title>Viral G Protein-Coupled Receptors: Attractive Targets for Herpesvirus-Associated Diseases.</title>
        <authorList>
            <person name="De Groof T.W.M."/>
            <person name="Elder E.G."/>
            <person name="Siderius M."/>
            <person name="Heukers R."/>
            <person name="Sinclair J.H."/>
            <person name="Smit M.J."/>
        </authorList>
    </citation>
    <scope>REVIEW</scope>
</reference>
<reference key="16">
    <citation type="journal article" date="2023" name="Mol. Cell">
        <title>An Epstein-Barr virus protein interaction map reveals NLRP3 inflammasome evasion via MAVS UFMylation.</title>
        <authorList>
            <person name="Yiu S.P.T."/>
            <person name="Zerbe C."/>
            <person name="Vanderwall D."/>
            <person name="Huttlin E.L."/>
            <person name="Weekes M.P."/>
            <person name="Gewurz B.E."/>
        </authorList>
    </citation>
    <scope>FUNCTION</scope>
    <scope>INTERACTION WITH HOST MAVS AND UFL1</scope>
    <scope>SUBCELLULAR LOCATION</scope>
</reference>
<reference key="17">
    <citation type="journal article" date="2021" name="Immunity">
        <title>Structural basis for the constitutive activity and immunomodulatory properties of the Epstein-Barr virus-encoded G protein-coupled receptor BILF1.</title>
        <authorList>
            <person name="Tsutsumi N."/>
            <person name="Qu Q."/>
            <person name="Mavri M."/>
            <person name="Baggesen M.S."/>
            <person name="Maeda S."/>
            <person name="Waghray D."/>
            <person name="Berg C."/>
            <person name="Kobilka B.K."/>
            <person name="Rosenkilde M.M."/>
            <person name="Skiniotis G."/>
            <person name="Garcia K.C."/>
        </authorList>
    </citation>
    <scope>STRUCTURE BY ELECTRON MICROSCOPY (3.20 ANGSTROMS) OF 1-312 IN COMPLEX WITH HOST GI HETEROTRIMER</scope>
    <scope>INTERACTION WITH HOST GI HETEROTRIMER</scope>
    <scope>MUTAGENESIS OF LEU-75; HIS-115; GLU-121; LYS-122; ALA-125; MET-240; LEU-241; ALA-271; TYR-282 AND HIS-288</scope>
</reference>
<accession>P03208</accession>
<accession>A0A1C9ZVS3</accession>
<accession>Q777B2</accession>
<organismHost>
    <name type="scientific">Homo sapiens</name>
    <name type="common">Human</name>
    <dbReference type="NCBI Taxonomy" id="9606"/>
</organismHost>
<dbReference type="EMBL" id="V01555">
    <property type="protein sequence ID" value="CAA24804.1"/>
    <property type="molecule type" value="Genomic_DNA"/>
</dbReference>
<dbReference type="EMBL" id="AJ507799">
    <property type="protein sequence ID" value="CAD53461.1"/>
    <property type="molecule type" value="Genomic_DNA"/>
</dbReference>
<dbReference type="EMBL" id="LC137018">
    <property type="protein sequence ID" value="BAV60102.1"/>
    <property type="status" value="ALT_INIT"/>
    <property type="molecule type" value="Genomic_DNA"/>
</dbReference>
<dbReference type="EMBL" id="LC149491">
    <property type="protein sequence ID" value="BAX36603.1"/>
    <property type="status" value="ALT_INIT"/>
    <property type="molecule type" value="Genomic_DNA"/>
</dbReference>
<dbReference type="EMBL" id="LC150327">
    <property type="protein sequence ID" value="BAX36651.1"/>
    <property type="status" value="ALT_INIT"/>
    <property type="molecule type" value="Genomic_DNA"/>
</dbReference>
<dbReference type="EMBL" id="LC150337">
    <property type="protein sequence ID" value="BAX36697.1"/>
    <property type="status" value="ALT_INIT"/>
    <property type="molecule type" value="Genomic_DNA"/>
</dbReference>
<dbReference type="EMBL" id="LC150338">
    <property type="protein sequence ID" value="BAX36744.1"/>
    <property type="status" value="ALT_INIT"/>
    <property type="molecule type" value="Genomic_DNA"/>
</dbReference>
<dbReference type="EMBL" id="LC150741">
    <property type="protein sequence ID" value="BAX36790.1"/>
    <property type="status" value="ALT_INIT"/>
    <property type="molecule type" value="Genomic_DNA"/>
</dbReference>
<dbReference type="EMBL" id="LC150742">
    <property type="protein sequence ID" value="BAX36838.1"/>
    <property type="status" value="ALT_INIT"/>
    <property type="molecule type" value="Genomic_DNA"/>
</dbReference>
<dbReference type="EMBL" id="LC150743">
    <property type="protein sequence ID" value="BAX36885.1"/>
    <property type="status" value="ALT_INIT"/>
    <property type="molecule type" value="Genomic_DNA"/>
</dbReference>
<dbReference type="PIR" id="A03770">
    <property type="entry name" value="QQBE3L"/>
</dbReference>
<dbReference type="RefSeq" id="YP_401711.1">
    <property type="nucleotide sequence ID" value="NC_007605.1"/>
</dbReference>
<dbReference type="PDB" id="7JHJ">
    <property type="method" value="EM"/>
    <property type="resolution" value="3.20 A"/>
    <property type="chains" value="E=1-312"/>
</dbReference>
<dbReference type="PDBsum" id="7JHJ"/>
<dbReference type="SMR" id="P03208"/>
<dbReference type="IntAct" id="P03208">
    <property type="interactions" value="9"/>
</dbReference>
<dbReference type="DNASU" id="3783707"/>
<dbReference type="GeneID" id="3783707"/>
<dbReference type="KEGG" id="vg:3783707"/>
<dbReference type="Proteomes" id="UP000153037">
    <property type="component" value="Segment"/>
</dbReference>
<dbReference type="GO" id="GO:0044193">
    <property type="term" value="C:host cell mitochondrial outer membrane"/>
    <property type="evidence" value="ECO:0007669"/>
    <property type="project" value="UniProtKB-SubCell"/>
</dbReference>
<dbReference type="GO" id="GO:0020002">
    <property type="term" value="C:host cell plasma membrane"/>
    <property type="evidence" value="ECO:0007669"/>
    <property type="project" value="UniProtKB-SubCell"/>
</dbReference>
<dbReference type="GO" id="GO:0005741">
    <property type="term" value="C:mitochondrial outer membrane"/>
    <property type="evidence" value="ECO:0000314"/>
    <property type="project" value="UniProt"/>
</dbReference>
<dbReference type="GO" id="GO:0030291">
    <property type="term" value="F:protein serine/threonine kinase inhibitor activity"/>
    <property type="evidence" value="ECO:0007669"/>
    <property type="project" value="UniProtKB-KW"/>
</dbReference>
<dbReference type="GO" id="GO:0030674">
    <property type="term" value="F:protein-macromolecule adaptor activity"/>
    <property type="evidence" value="ECO:0000314"/>
    <property type="project" value="UniProt"/>
</dbReference>
<dbReference type="GO" id="GO:1900226">
    <property type="term" value="P:negative regulation of NLRP3 inflammasome complex assembly"/>
    <property type="evidence" value="ECO:0000314"/>
    <property type="project" value="UniProt"/>
</dbReference>
<dbReference type="GO" id="GO:0046776">
    <property type="term" value="P:symbiont-mediated suppression of host antigen processing and presentation of peptide antigen via MHC class I"/>
    <property type="evidence" value="ECO:0000314"/>
    <property type="project" value="UniProtKB"/>
</dbReference>
<dbReference type="GO" id="GO:0052170">
    <property type="term" value="P:symbiont-mediated suppression of host innate immune response"/>
    <property type="evidence" value="ECO:0007669"/>
    <property type="project" value="UniProtKB-KW"/>
</dbReference>
<dbReference type="GO" id="GO:0039580">
    <property type="term" value="P:symbiont-mediated suppression of host PKR/eIFalpha signaling"/>
    <property type="evidence" value="ECO:0007669"/>
    <property type="project" value="UniProtKB-KW"/>
</dbReference>
<dbReference type="GO" id="GO:0039502">
    <property type="term" value="P:symbiont-mediated suppression of host type I interferon-mediated signaling pathway"/>
    <property type="evidence" value="ECO:0007669"/>
    <property type="project" value="UniProtKB-KW"/>
</dbReference>
<dbReference type="Gene3D" id="1.20.1070.10">
    <property type="entry name" value="Rhodopsin 7-helix transmembrane proteins"/>
    <property type="match status" value="1"/>
</dbReference>
<dbReference type="SUPFAM" id="SSF81321">
    <property type="entry name" value="Family A G protein-coupled receptor-like"/>
    <property type="match status" value="1"/>
</dbReference>
<organism>
    <name type="scientific">Epstein-Barr virus (strain B95-8)</name>
    <name type="common">HHV-4</name>
    <name type="synonym">Human herpesvirus 4</name>
    <dbReference type="NCBI Taxonomy" id="10377"/>
    <lineage>
        <taxon>Viruses</taxon>
        <taxon>Duplodnaviria</taxon>
        <taxon>Heunggongvirae</taxon>
        <taxon>Peploviricota</taxon>
        <taxon>Herviviricetes</taxon>
        <taxon>Herpesvirales</taxon>
        <taxon>Orthoherpesviridae</taxon>
        <taxon>Gammaherpesvirinae</taxon>
        <taxon>Lymphocryptovirus</taxon>
        <taxon>Lymphocryptovirus humangamma4</taxon>
        <taxon>Epstein-Barr virus (strain GD1)</taxon>
    </lineage>
</organism>
<proteinExistence type="evidence at protein level"/>
<protein>
    <recommendedName>
        <fullName>G-protein coupled receptor BILF1</fullName>
        <shortName evidence="12">GPCR BILF1</shortName>
    </recommendedName>
</protein>
<gene>
    <name type="ORF">BILF1</name>
</gene>